<keyword id="KW-0479">Metal-binding</keyword>
<keyword id="KW-0862">Zinc</keyword>
<comment type="function">
    <text evidence="1">Inhibits all the catalytic activities of DNA gyrase by preventing its interaction with DNA. Acts by binding directly to the C-terminal domain of GyrB, which probably disrupts DNA binding by the gyrase.</text>
</comment>
<comment type="cofactor">
    <cofactor evidence="1">
        <name>Zn(2+)</name>
        <dbReference type="ChEBI" id="CHEBI:29105"/>
    </cofactor>
    <text evidence="1">Binds 1 zinc ion.</text>
</comment>
<comment type="subunit">
    <text evidence="1">Interacts with GyrB.</text>
</comment>
<comment type="similarity">
    <text evidence="1">Belongs to the DNA gyrase inhibitor YacG family.</text>
</comment>
<dbReference type="EMBL" id="AE014291">
    <property type="protein sequence ID" value="AAN29196.1"/>
    <property type="molecule type" value="Genomic_DNA"/>
</dbReference>
<dbReference type="EMBL" id="CP002997">
    <property type="protein sequence ID" value="AEM17609.1"/>
    <property type="molecule type" value="Genomic_DNA"/>
</dbReference>
<dbReference type="SMR" id="P67480"/>
<dbReference type="KEGG" id="bms:BR0247"/>
<dbReference type="KEGG" id="bsi:BS1330_I0248"/>
<dbReference type="HOGENOM" id="CLU_178280_2_0_5"/>
<dbReference type="Proteomes" id="UP000007104">
    <property type="component" value="Chromosome I"/>
</dbReference>
<dbReference type="GO" id="GO:0008657">
    <property type="term" value="F:DNA topoisomerase type II (double strand cut, ATP-hydrolyzing) inhibitor activity"/>
    <property type="evidence" value="ECO:0007669"/>
    <property type="project" value="UniProtKB-UniRule"/>
</dbReference>
<dbReference type="GO" id="GO:0008270">
    <property type="term" value="F:zinc ion binding"/>
    <property type="evidence" value="ECO:0007669"/>
    <property type="project" value="UniProtKB-UniRule"/>
</dbReference>
<dbReference type="GO" id="GO:0006355">
    <property type="term" value="P:regulation of DNA-templated transcription"/>
    <property type="evidence" value="ECO:0007669"/>
    <property type="project" value="InterPro"/>
</dbReference>
<dbReference type="Gene3D" id="3.30.50.10">
    <property type="entry name" value="Erythroid Transcription Factor GATA-1, subunit A"/>
    <property type="match status" value="1"/>
</dbReference>
<dbReference type="HAMAP" id="MF_00649">
    <property type="entry name" value="DNA_gyrase_inhibitor_YacG"/>
    <property type="match status" value="1"/>
</dbReference>
<dbReference type="InterPro" id="IPR005584">
    <property type="entry name" value="DNA_gyrase_inhibitor_YacG"/>
</dbReference>
<dbReference type="InterPro" id="IPR013088">
    <property type="entry name" value="Znf_NHR/GATA"/>
</dbReference>
<dbReference type="NCBIfam" id="NF002362">
    <property type="entry name" value="PRK01343.1"/>
    <property type="match status" value="1"/>
</dbReference>
<dbReference type="PANTHER" id="PTHR36150">
    <property type="entry name" value="DNA GYRASE INHIBITOR YACG"/>
    <property type="match status" value="1"/>
</dbReference>
<dbReference type="PANTHER" id="PTHR36150:SF1">
    <property type="entry name" value="DNA GYRASE INHIBITOR YACG"/>
    <property type="match status" value="1"/>
</dbReference>
<dbReference type="Pfam" id="PF03884">
    <property type="entry name" value="YacG"/>
    <property type="match status" value="1"/>
</dbReference>
<dbReference type="SUPFAM" id="SSF57716">
    <property type="entry name" value="Glucocorticoid receptor-like (DNA-binding domain)"/>
    <property type="match status" value="1"/>
</dbReference>
<gene>
    <name evidence="1" type="primary">yacG</name>
    <name type="ordered locus">BR0247</name>
    <name type="ordered locus">BS1330_I0248</name>
</gene>
<proteinExistence type="inferred from homology"/>
<accession>P67480</accession>
<accession>G0KBU6</accession>
<accession>Q8G2R7</accession>
<accession>Q8YF54</accession>
<protein>
    <recommendedName>
        <fullName evidence="1">DNA gyrase inhibitor YacG</fullName>
    </recommendedName>
</protein>
<organism>
    <name type="scientific">Brucella suis biovar 1 (strain 1330)</name>
    <dbReference type="NCBI Taxonomy" id="204722"/>
    <lineage>
        <taxon>Bacteria</taxon>
        <taxon>Pseudomonadati</taxon>
        <taxon>Pseudomonadota</taxon>
        <taxon>Alphaproteobacteria</taxon>
        <taxon>Hyphomicrobiales</taxon>
        <taxon>Brucellaceae</taxon>
        <taxon>Brucella/Ochrobactrum group</taxon>
        <taxon>Brucella</taxon>
    </lineage>
</organism>
<sequence>MTPLRPTRPCPECGKPSTREAYPFCSPRCKNIDLNRWLSGSYVIAGKPLGEEDENDS</sequence>
<name>YACG_BRUSU</name>
<evidence type="ECO:0000255" key="1">
    <source>
        <dbReference type="HAMAP-Rule" id="MF_00649"/>
    </source>
</evidence>
<reference key="1">
    <citation type="journal article" date="2002" name="Proc. Natl. Acad. Sci. U.S.A.">
        <title>The Brucella suis genome reveals fundamental similarities between animal and plant pathogens and symbionts.</title>
        <authorList>
            <person name="Paulsen I.T."/>
            <person name="Seshadri R."/>
            <person name="Nelson K.E."/>
            <person name="Eisen J.A."/>
            <person name="Heidelberg J.F."/>
            <person name="Read T.D."/>
            <person name="Dodson R.J."/>
            <person name="Umayam L.A."/>
            <person name="Brinkac L.M."/>
            <person name="Beanan M.J."/>
            <person name="Daugherty S.C."/>
            <person name="DeBoy R.T."/>
            <person name="Durkin A.S."/>
            <person name="Kolonay J.F."/>
            <person name="Madupu R."/>
            <person name="Nelson W.C."/>
            <person name="Ayodeji B."/>
            <person name="Kraul M."/>
            <person name="Shetty J."/>
            <person name="Malek J.A."/>
            <person name="Van Aken S.E."/>
            <person name="Riedmuller S."/>
            <person name="Tettelin H."/>
            <person name="Gill S.R."/>
            <person name="White O."/>
            <person name="Salzberg S.L."/>
            <person name="Hoover D.L."/>
            <person name="Lindler L.E."/>
            <person name="Halling S.M."/>
            <person name="Boyle S.M."/>
            <person name="Fraser C.M."/>
        </authorList>
    </citation>
    <scope>NUCLEOTIDE SEQUENCE [LARGE SCALE GENOMIC DNA]</scope>
    <source>
        <strain>1330</strain>
    </source>
</reference>
<reference key="2">
    <citation type="journal article" date="2011" name="J. Bacteriol.">
        <title>Revised genome sequence of Brucella suis 1330.</title>
        <authorList>
            <person name="Tae H."/>
            <person name="Shallom S."/>
            <person name="Settlage R."/>
            <person name="Preston D."/>
            <person name="Adams L.G."/>
            <person name="Garner H.R."/>
        </authorList>
    </citation>
    <scope>NUCLEOTIDE SEQUENCE [LARGE SCALE GENOMIC DNA]</scope>
    <source>
        <strain>1330</strain>
    </source>
</reference>
<feature type="chain" id="PRO_0000211692" description="DNA gyrase inhibitor YacG">
    <location>
        <begin position="1"/>
        <end position="57"/>
    </location>
</feature>
<feature type="binding site" evidence="1">
    <location>
        <position position="10"/>
    </location>
    <ligand>
        <name>Zn(2+)</name>
        <dbReference type="ChEBI" id="CHEBI:29105"/>
    </ligand>
</feature>
<feature type="binding site" evidence="1">
    <location>
        <position position="13"/>
    </location>
    <ligand>
        <name>Zn(2+)</name>
        <dbReference type="ChEBI" id="CHEBI:29105"/>
    </ligand>
</feature>
<feature type="binding site" evidence="1">
    <location>
        <position position="25"/>
    </location>
    <ligand>
        <name>Zn(2+)</name>
        <dbReference type="ChEBI" id="CHEBI:29105"/>
    </ligand>
</feature>
<feature type="binding site" evidence="1">
    <location>
        <position position="29"/>
    </location>
    <ligand>
        <name>Zn(2+)</name>
        <dbReference type="ChEBI" id="CHEBI:29105"/>
    </ligand>
</feature>